<keyword id="KW-0240">DNA-directed RNA polymerase</keyword>
<keyword id="KW-0548">Nucleotidyltransferase</keyword>
<keyword id="KW-1185">Reference proteome</keyword>
<keyword id="KW-0804">Transcription</keyword>
<keyword id="KW-0808">Transferase</keyword>
<dbReference type="EC" id="2.7.7.6" evidence="1"/>
<dbReference type="EMBL" id="CP000387">
    <property type="protein sequence ID" value="ABN43770.1"/>
    <property type="molecule type" value="Genomic_DNA"/>
</dbReference>
<dbReference type="RefSeq" id="WP_011836427.1">
    <property type="nucleotide sequence ID" value="NC_009009.1"/>
</dbReference>
<dbReference type="RefSeq" id="YP_001034320.1">
    <property type="nucleotide sequence ID" value="NC_009009.1"/>
</dbReference>
<dbReference type="SMR" id="A3CKR5"/>
<dbReference type="STRING" id="388919.SSA_0313"/>
<dbReference type="KEGG" id="ssa:SSA_0313"/>
<dbReference type="PATRIC" id="fig|388919.9.peg.303"/>
<dbReference type="eggNOG" id="COG5503">
    <property type="taxonomic scope" value="Bacteria"/>
</dbReference>
<dbReference type="HOGENOM" id="CLU_187518_0_0_9"/>
<dbReference type="OrthoDB" id="2147503at2"/>
<dbReference type="Proteomes" id="UP000002148">
    <property type="component" value="Chromosome"/>
</dbReference>
<dbReference type="GO" id="GO:0000428">
    <property type="term" value="C:DNA-directed RNA polymerase complex"/>
    <property type="evidence" value="ECO:0007669"/>
    <property type="project" value="UniProtKB-KW"/>
</dbReference>
<dbReference type="GO" id="GO:0003677">
    <property type="term" value="F:DNA binding"/>
    <property type="evidence" value="ECO:0007669"/>
    <property type="project" value="UniProtKB-UniRule"/>
</dbReference>
<dbReference type="GO" id="GO:0003899">
    <property type="term" value="F:DNA-directed RNA polymerase activity"/>
    <property type="evidence" value="ECO:0007669"/>
    <property type="project" value="UniProtKB-UniRule"/>
</dbReference>
<dbReference type="GO" id="GO:0006351">
    <property type="term" value="P:DNA-templated transcription"/>
    <property type="evidence" value="ECO:0007669"/>
    <property type="project" value="UniProtKB-UniRule"/>
</dbReference>
<dbReference type="Gene3D" id="3.10.20.730">
    <property type="entry name" value="RNAP, epsilon subunit-like"/>
    <property type="match status" value="1"/>
</dbReference>
<dbReference type="HAMAP" id="MF_01553">
    <property type="entry name" value="RNApol_bact_RpoY"/>
    <property type="match status" value="1"/>
</dbReference>
<dbReference type="InterPro" id="IPR009907">
    <property type="entry name" value="RpoY"/>
</dbReference>
<dbReference type="NCBIfam" id="NF010188">
    <property type="entry name" value="PRK13667.1"/>
    <property type="match status" value="1"/>
</dbReference>
<dbReference type="Pfam" id="PF07288">
    <property type="entry name" value="RpoY"/>
    <property type="match status" value="1"/>
</dbReference>
<accession>A3CKR5</accession>
<reference key="1">
    <citation type="journal article" date="2007" name="J. Bacteriol.">
        <title>Genome of the opportunistic pathogen Streptococcus sanguinis.</title>
        <authorList>
            <person name="Xu P."/>
            <person name="Alves J.M."/>
            <person name="Kitten T."/>
            <person name="Brown A."/>
            <person name="Chen Z."/>
            <person name="Ozaki L.S."/>
            <person name="Manque P."/>
            <person name="Ge X."/>
            <person name="Serrano M.G."/>
            <person name="Puiu D."/>
            <person name="Hendricks S."/>
            <person name="Wang Y."/>
            <person name="Chaplin M.D."/>
            <person name="Akan D."/>
            <person name="Paik S."/>
            <person name="Peterson D.L."/>
            <person name="Macrina F.L."/>
            <person name="Buck G.A."/>
        </authorList>
    </citation>
    <scope>NUCLEOTIDE SEQUENCE [LARGE SCALE GENOMIC DNA]</scope>
    <source>
        <strain>SK36</strain>
    </source>
</reference>
<sequence length="76" mass="9219">MIYKVFYQETKERSPRREKTRALYLEIEAANELEGRIQARKLIEENTPYNIEFIELLSDKHLEYEKESGTFELTEF</sequence>
<proteinExistence type="inferred from homology"/>
<gene>
    <name evidence="1" type="primary">rpoY</name>
    <name type="ordered locus">SSA_0313</name>
</gene>
<name>RPOY_STRSV</name>
<feature type="chain" id="PRO_1000068883" description="DNA-directed RNA polymerase subunit epsilon">
    <location>
        <begin position="1"/>
        <end position="76"/>
    </location>
</feature>
<comment type="function">
    <text evidence="1">A non-essential component of RNA polymerase (RNAP).</text>
</comment>
<comment type="catalytic activity">
    <reaction evidence="1">
        <text>RNA(n) + a ribonucleoside 5'-triphosphate = RNA(n+1) + diphosphate</text>
        <dbReference type="Rhea" id="RHEA:21248"/>
        <dbReference type="Rhea" id="RHEA-COMP:14527"/>
        <dbReference type="Rhea" id="RHEA-COMP:17342"/>
        <dbReference type="ChEBI" id="CHEBI:33019"/>
        <dbReference type="ChEBI" id="CHEBI:61557"/>
        <dbReference type="ChEBI" id="CHEBI:140395"/>
        <dbReference type="EC" id="2.7.7.6"/>
    </reaction>
</comment>
<comment type="subunit">
    <text evidence="1">RNAP is composed of a core of 2 alpha, a beta and a beta' subunit. The core is associated with a delta subunit, and at least one of epsilon or omega. When a sigma factor is associated with the core the holoenzyme is formed, which can initiate transcription.</text>
</comment>
<comment type="similarity">
    <text evidence="1">Belongs to the RNA polymerase subunit epsilon family.</text>
</comment>
<protein>
    <recommendedName>
        <fullName evidence="1">DNA-directed RNA polymerase subunit epsilon</fullName>
        <shortName evidence="1">RNAP epsilon subunit</shortName>
        <ecNumber evidence="1">2.7.7.6</ecNumber>
    </recommendedName>
    <alternativeName>
        <fullName evidence="1">RNA polymerase epsilon subunit</fullName>
    </alternativeName>
    <alternativeName>
        <fullName evidence="1">Transcriptase subunit epsilon</fullName>
    </alternativeName>
</protein>
<organism>
    <name type="scientific">Streptococcus sanguinis (strain SK36)</name>
    <dbReference type="NCBI Taxonomy" id="388919"/>
    <lineage>
        <taxon>Bacteria</taxon>
        <taxon>Bacillati</taxon>
        <taxon>Bacillota</taxon>
        <taxon>Bacilli</taxon>
        <taxon>Lactobacillales</taxon>
        <taxon>Streptococcaceae</taxon>
        <taxon>Streptococcus</taxon>
    </lineage>
</organism>
<evidence type="ECO:0000255" key="1">
    <source>
        <dbReference type="HAMAP-Rule" id="MF_01553"/>
    </source>
</evidence>